<reference key="1">
    <citation type="journal article" date="2006" name="PLoS Genet.">
        <title>Comparative genomics of emerging human ehrlichiosis agents.</title>
        <authorList>
            <person name="Dunning Hotopp J.C."/>
            <person name="Lin M."/>
            <person name="Madupu R."/>
            <person name="Crabtree J."/>
            <person name="Angiuoli S.V."/>
            <person name="Eisen J.A."/>
            <person name="Seshadri R."/>
            <person name="Ren Q."/>
            <person name="Wu M."/>
            <person name="Utterback T.R."/>
            <person name="Smith S."/>
            <person name="Lewis M."/>
            <person name="Khouri H."/>
            <person name="Zhang C."/>
            <person name="Niu H."/>
            <person name="Lin Q."/>
            <person name="Ohashi N."/>
            <person name="Zhi N."/>
            <person name="Nelson W.C."/>
            <person name="Brinkac L.M."/>
            <person name="Dodson R.J."/>
            <person name="Rosovitz M.J."/>
            <person name="Sundaram J.P."/>
            <person name="Daugherty S.C."/>
            <person name="Davidsen T."/>
            <person name="Durkin A.S."/>
            <person name="Gwinn M.L."/>
            <person name="Haft D.H."/>
            <person name="Selengut J.D."/>
            <person name="Sullivan S.A."/>
            <person name="Zafar N."/>
            <person name="Zhou L."/>
            <person name="Benahmed F."/>
            <person name="Forberger H."/>
            <person name="Halpin R."/>
            <person name="Mulligan S."/>
            <person name="Robinson J."/>
            <person name="White O."/>
            <person name="Rikihisa Y."/>
            <person name="Tettelin H."/>
        </authorList>
    </citation>
    <scope>NUCLEOTIDE SEQUENCE [LARGE SCALE GENOMIC DNA]</scope>
    <source>
        <strain>ATCC CRL-10679 / Arkansas</strain>
    </source>
</reference>
<dbReference type="EMBL" id="CP000236">
    <property type="protein sequence ID" value="ABD45021.1"/>
    <property type="molecule type" value="Genomic_DNA"/>
</dbReference>
<dbReference type="RefSeq" id="WP_006010180.1">
    <property type="nucleotide sequence ID" value="NC_007799.1"/>
</dbReference>
<dbReference type="SMR" id="Q2GH99"/>
<dbReference type="STRING" id="205920.ECH_0364"/>
<dbReference type="KEGG" id="ech:ECH_0364"/>
<dbReference type="eggNOG" id="COG0234">
    <property type="taxonomic scope" value="Bacteria"/>
</dbReference>
<dbReference type="HOGENOM" id="CLU_132825_1_0_5"/>
<dbReference type="OrthoDB" id="9806791at2"/>
<dbReference type="Proteomes" id="UP000008320">
    <property type="component" value="Chromosome"/>
</dbReference>
<dbReference type="GO" id="GO:0005737">
    <property type="term" value="C:cytoplasm"/>
    <property type="evidence" value="ECO:0007669"/>
    <property type="project" value="UniProtKB-SubCell"/>
</dbReference>
<dbReference type="GO" id="GO:0005524">
    <property type="term" value="F:ATP binding"/>
    <property type="evidence" value="ECO:0007669"/>
    <property type="project" value="InterPro"/>
</dbReference>
<dbReference type="GO" id="GO:0046872">
    <property type="term" value="F:metal ion binding"/>
    <property type="evidence" value="ECO:0007669"/>
    <property type="project" value="TreeGrafter"/>
</dbReference>
<dbReference type="GO" id="GO:0044183">
    <property type="term" value="F:protein folding chaperone"/>
    <property type="evidence" value="ECO:0007669"/>
    <property type="project" value="InterPro"/>
</dbReference>
<dbReference type="GO" id="GO:0051087">
    <property type="term" value="F:protein-folding chaperone binding"/>
    <property type="evidence" value="ECO:0007669"/>
    <property type="project" value="TreeGrafter"/>
</dbReference>
<dbReference type="GO" id="GO:0051082">
    <property type="term" value="F:unfolded protein binding"/>
    <property type="evidence" value="ECO:0007669"/>
    <property type="project" value="TreeGrafter"/>
</dbReference>
<dbReference type="GO" id="GO:0051085">
    <property type="term" value="P:chaperone cofactor-dependent protein refolding"/>
    <property type="evidence" value="ECO:0007669"/>
    <property type="project" value="TreeGrafter"/>
</dbReference>
<dbReference type="CDD" id="cd00320">
    <property type="entry name" value="cpn10"/>
    <property type="match status" value="1"/>
</dbReference>
<dbReference type="FunFam" id="2.30.33.40:FF:000001">
    <property type="entry name" value="10 kDa chaperonin"/>
    <property type="match status" value="1"/>
</dbReference>
<dbReference type="Gene3D" id="2.30.33.40">
    <property type="entry name" value="GroES chaperonin"/>
    <property type="match status" value="1"/>
</dbReference>
<dbReference type="HAMAP" id="MF_00580">
    <property type="entry name" value="CH10"/>
    <property type="match status" value="1"/>
</dbReference>
<dbReference type="InterPro" id="IPR020818">
    <property type="entry name" value="Chaperonin_GroES"/>
</dbReference>
<dbReference type="InterPro" id="IPR037124">
    <property type="entry name" value="Chaperonin_GroES_sf"/>
</dbReference>
<dbReference type="InterPro" id="IPR011032">
    <property type="entry name" value="GroES-like_sf"/>
</dbReference>
<dbReference type="NCBIfam" id="NF001533">
    <property type="entry name" value="PRK00364.2-4"/>
    <property type="match status" value="1"/>
</dbReference>
<dbReference type="PANTHER" id="PTHR10772">
    <property type="entry name" value="10 KDA HEAT SHOCK PROTEIN"/>
    <property type="match status" value="1"/>
</dbReference>
<dbReference type="PANTHER" id="PTHR10772:SF63">
    <property type="entry name" value="20 KDA CHAPERONIN, CHLOROPLASTIC"/>
    <property type="match status" value="1"/>
</dbReference>
<dbReference type="Pfam" id="PF00166">
    <property type="entry name" value="Cpn10"/>
    <property type="match status" value="1"/>
</dbReference>
<dbReference type="PRINTS" id="PR00297">
    <property type="entry name" value="CHAPERONIN10"/>
</dbReference>
<dbReference type="SMART" id="SM00883">
    <property type="entry name" value="Cpn10"/>
    <property type="match status" value="1"/>
</dbReference>
<dbReference type="SUPFAM" id="SSF50129">
    <property type="entry name" value="GroES-like"/>
    <property type="match status" value="1"/>
</dbReference>
<sequence>MNLNMLHDNVLIEALEECNSSSPIQLPDSAKKKPTQGKVVAVGPGVYNHSGNILPMTIKVGDVVFYRQWAGNEIEFHDKKYIVMKESDIIAKEA</sequence>
<protein>
    <recommendedName>
        <fullName evidence="1">Co-chaperonin GroES</fullName>
    </recommendedName>
    <alternativeName>
        <fullName evidence="1">10 kDa chaperonin</fullName>
    </alternativeName>
    <alternativeName>
        <fullName evidence="1">Chaperonin-10</fullName>
        <shortName evidence="1">Cpn10</shortName>
    </alternativeName>
</protein>
<name>CH10_EHRCR</name>
<gene>
    <name evidence="1" type="primary">groES</name>
    <name evidence="1" type="synonym">groS</name>
    <name type="ordered locus">ECH_0364</name>
</gene>
<organism>
    <name type="scientific">Ehrlichia chaffeensis (strain ATCC CRL-10679 / Arkansas)</name>
    <dbReference type="NCBI Taxonomy" id="205920"/>
    <lineage>
        <taxon>Bacteria</taxon>
        <taxon>Pseudomonadati</taxon>
        <taxon>Pseudomonadota</taxon>
        <taxon>Alphaproteobacteria</taxon>
        <taxon>Rickettsiales</taxon>
        <taxon>Anaplasmataceae</taxon>
        <taxon>Ehrlichia</taxon>
    </lineage>
</organism>
<evidence type="ECO:0000255" key="1">
    <source>
        <dbReference type="HAMAP-Rule" id="MF_00580"/>
    </source>
</evidence>
<keyword id="KW-0143">Chaperone</keyword>
<keyword id="KW-0963">Cytoplasm</keyword>
<keyword id="KW-1185">Reference proteome</keyword>
<proteinExistence type="inferred from homology"/>
<feature type="chain" id="PRO_1000025256" description="Co-chaperonin GroES">
    <location>
        <begin position="1"/>
        <end position="94"/>
    </location>
</feature>
<comment type="function">
    <text evidence="1">Together with the chaperonin GroEL, plays an essential role in assisting protein folding. The GroEL-GroES system forms a nano-cage that allows encapsulation of the non-native substrate proteins and provides a physical environment optimized to promote and accelerate protein folding. GroES binds to the apical surface of the GroEL ring, thereby capping the opening of the GroEL channel.</text>
</comment>
<comment type="subunit">
    <text evidence="1">Heptamer of 7 subunits arranged in a ring. Interacts with the chaperonin GroEL.</text>
</comment>
<comment type="subcellular location">
    <subcellularLocation>
        <location evidence="1">Cytoplasm</location>
    </subcellularLocation>
</comment>
<comment type="similarity">
    <text evidence="1">Belongs to the GroES chaperonin family.</text>
</comment>
<accession>Q2GH99</accession>